<feature type="chain" id="PRO_0000229190" description="tRNA (guanine-N(7)-)-methyltransferase">
    <location>
        <begin position="1"/>
        <end position="256"/>
    </location>
</feature>
<feature type="region of interest" description="Disordered" evidence="3">
    <location>
        <begin position="1"/>
        <end position="35"/>
    </location>
</feature>
<feature type="region of interest" description="Interaction with RNA" evidence="2">
    <location>
        <begin position="166"/>
        <end position="171"/>
    </location>
</feature>
<feature type="compositionally biased region" description="Polar residues" evidence="3">
    <location>
        <begin position="1"/>
        <end position="11"/>
    </location>
</feature>
<feature type="active site" evidence="1">
    <location>
        <position position="160"/>
    </location>
</feature>
<feature type="binding site" evidence="2">
    <location>
        <position position="85"/>
    </location>
    <ligand>
        <name>S-adenosyl-L-methionine</name>
        <dbReference type="ChEBI" id="CHEBI:59789"/>
    </ligand>
</feature>
<feature type="binding site" evidence="2">
    <location>
        <position position="110"/>
    </location>
    <ligand>
        <name>S-adenosyl-L-methionine</name>
        <dbReference type="ChEBI" id="CHEBI:59789"/>
    </ligand>
</feature>
<feature type="binding site" evidence="2">
    <location>
        <position position="137"/>
    </location>
    <ligand>
        <name>S-adenosyl-L-methionine</name>
        <dbReference type="ChEBI" id="CHEBI:59789"/>
    </ligand>
</feature>
<feature type="binding site" evidence="2">
    <location>
        <position position="160"/>
    </location>
    <ligand>
        <name>S-adenosyl-L-methionine</name>
        <dbReference type="ChEBI" id="CHEBI:59789"/>
    </ligand>
</feature>
<feature type="binding site" evidence="2">
    <location>
        <position position="164"/>
    </location>
    <ligand>
        <name>substrate</name>
    </ligand>
</feature>
<feature type="binding site" evidence="2">
    <location>
        <position position="196"/>
    </location>
    <ligand>
        <name>substrate</name>
    </ligand>
</feature>
<feature type="binding site" evidence="2">
    <location>
        <begin position="234"/>
        <end position="237"/>
    </location>
    <ligand>
        <name>substrate</name>
    </ligand>
</feature>
<gene>
    <name evidence="2" type="primary">trmB</name>
    <name type="ordered locus">Reut_A0758</name>
</gene>
<accession>Q474P5</accession>
<keyword id="KW-0489">Methyltransferase</keyword>
<keyword id="KW-0949">S-adenosyl-L-methionine</keyword>
<keyword id="KW-0808">Transferase</keyword>
<keyword id="KW-0819">tRNA processing</keyword>
<name>TRMB_CUPPJ</name>
<evidence type="ECO:0000250" key="1"/>
<evidence type="ECO:0000255" key="2">
    <source>
        <dbReference type="HAMAP-Rule" id="MF_01057"/>
    </source>
</evidence>
<evidence type="ECO:0000256" key="3">
    <source>
        <dbReference type="SAM" id="MobiDB-lite"/>
    </source>
</evidence>
<organism>
    <name type="scientific">Cupriavidus pinatubonensis (strain JMP 134 / LMG 1197)</name>
    <name type="common">Cupriavidus necator (strain JMP 134)</name>
    <dbReference type="NCBI Taxonomy" id="264198"/>
    <lineage>
        <taxon>Bacteria</taxon>
        <taxon>Pseudomonadati</taxon>
        <taxon>Pseudomonadota</taxon>
        <taxon>Betaproteobacteria</taxon>
        <taxon>Burkholderiales</taxon>
        <taxon>Burkholderiaceae</taxon>
        <taxon>Cupriavidus</taxon>
    </lineage>
</organism>
<sequence>MHPQDASTEQTPVDDDQVESSQPVHAPEDVAHPRRIRSFVRRAGRTSSGQQRAIDEVGPRLIVPYAPHPLDWEAAFGRKAPAILEIGFGMGETTAHIAQLRPQDNFLGCEVHEPGVGALLKLADEREIGNIRIIQHDAVEVVAHMLTEDCLDGVHIYFPDPWHKKRHNKRRLVQPPLVKLLASRLKPGGYIHCATDWEEYAHQMVEVLAGEPALENASSAADGFSERPEYRPITKFERRGVRLGHGVWDVVFRKRG</sequence>
<comment type="function">
    <text evidence="2">Catalyzes the formation of N(7)-methylguanine at position 46 (m7G46) in tRNA.</text>
</comment>
<comment type="catalytic activity">
    <reaction evidence="2">
        <text>guanosine(46) in tRNA + S-adenosyl-L-methionine = N(7)-methylguanosine(46) in tRNA + S-adenosyl-L-homocysteine</text>
        <dbReference type="Rhea" id="RHEA:42708"/>
        <dbReference type="Rhea" id="RHEA-COMP:10188"/>
        <dbReference type="Rhea" id="RHEA-COMP:10189"/>
        <dbReference type="ChEBI" id="CHEBI:57856"/>
        <dbReference type="ChEBI" id="CHEBI:59789"/>
        <dbReference type="ChEBI" id="CHEBI:74269"/>
        <dbReference type="ChEBI" id="CHEBI:74480"/>
        <dbReference type="EC" id="2.1.1.33"/>
    </reaction>
</comment>
<comment type="pathway">
    <text evidence="2">tRNA modification; N(7)-methylguanine-tRNA biosynthesis.</text>
</comment>
<comment type="similarity">
    <text evidence="2">Belongs to the class I-like SAM-binding methyltransferase superfamily. TrmB family.</text>
</comment>
<protein>
    <recommendedName>
        <fullName evidence="2">tRNA (guanine-N(7)-)-methyltransferase</fullName>
        <ecNumber evidence="2">2.1.1.33</ecNumber>
    </recommendedName>
    <alternativeName>
        <fullName evidence="2">tRNA (guanine(46)-N(7))-methyltransferase</fullName>
    </alternativeName>
    <alternativeName>
        <fullName evidence="2">tRNA(m7G46)-methyltransferase</fullName>
    </alternativeName>
</protein>
<dbReference type="EC" id="2.1.1.33" evidence="2"/>
<dbReference type="EMBL" id="CP000090">
    <property type="protein sequence ID" value="AAZ60138.1"/>
    <property type="molecule type" value="Genomic_DNA"/>
</dbReference>
<dbReference type="SMR" id="Q474P5"/>
<dbReference type="STRING" id="264198.Reut_A0758"/>
<dbReference type="KEGG" id="reu:Reut_A0758"/>
<dbReference type="eggNOG" id="COG0220">
    <property type="taxonomic scope" value="Bacteria"/>
</dbReference>
<dbReference type="HOGENOM" id="CLU_050910_0_1_4"/>
<dbReference type="OrthoDB" id="9802090at2"/>
<dbReference type="UniPathway" id="UPA00989"/>
<dbReference type="GO" id="GO:0043527">
    <property type="term" value="C:tRNA methyltransferase complex"/>
    <property type="evidence" value="ECO:0007669"/>
    <property type="project" value="TreeGrafter"/>
</dbReference>
<dbReference type="GO" id="GO:0008176">
    <property type="term" value="F:tRNA (guanine(46)-N7)-methyltransferase activity"/>
    <property type="evidence" value="ECO:0007669"/>
    <property type="project" value="UniProtKB-UniRule"/>
</dbReference>
<dbReference type="CDD" id="cd02440">
    <property type="entry name" value="AdoMet_MTases"/>
    <property type="match status" value="1"/>
</dbReference>
<dbReference type="FunFam" id="3.40.50.150:FF:000035">
    <property type="entry name" value="tRNA (guanine-N(7)-)-methyltransferase"/>
    <property type="match status" value="1"/>
</dbReference>
<dbReference type="Gene3D" id="3.40.50.150">
    <property type="entry name" value="Vaccinia Virus protein VP39"/>
    <property type="match status" value="1"/>
</dbReference>
<dbReference type="HAMAP" id="MF_01057">
    <property type="entry name" value="tRNA_methyltr_TrmB"/>
    <property type="match status" value="1"/>
</dbReference>
<dbReference type="InterPro" id="IPR029063">
    <property type="entry name" value="SAM-dependent_MTases_sf"/>
</dbReference>
<dbReference type="InterPro" id="IPR003358">
    <property type="entry name" value="tRNA_(Gua-N-7)_MeTrfase_Trmb"/>
</dbReference>
<dbReference type="InterPro" id="IPR055361">
    <property type="entry name" value="tRNA_methyltr_TrmB_bact"/>
</dbReference>
<dbReference type="NCBIfam" id="TIGR00091">
    <property type="entry name" value="tRNA (guanosine(46)-N7)-methyltransferase TrmB"/>
    <property type="match status" value="1"/>
</dbReference>
<dbReference type="PANTHER" id="PTHR23417">
    <property type="entry name" value="3-DEOXY-D-MANNO-OCTULOSONIC-ACID TRANSFERASE/TRNA GUANINE-N 7 - -METHYLTRANSFERASE"/>
    <property type="match status" value="1"/>
</dbReference>
<dbReference type="PANTHER" id="PTHR23417:SF14">
    <property type="entry name" value="PENTACOTRIPEPTIDE-REPEAT REGION OF PRORP DOMAIN-CONTAINING PROTEIN"/>
    <property type="match status" value="1"/>
</dbReference>
<dbReference type="Pfam" id="PF02390">
    <property type="entry name" value="Methyltransf_4"/>
    <property type="match status" value="1"/>
</dbReference>
<dbReference type="SUPFAM" id="SSF53335">
    <property type="entry name" value="S-adenosyl-L-methionine-dependent methyltransferases"/>
    <property type="match status" value="1"/>
</dbReference>
<dbReference type="PROSITE" id="PS51625">
    <property type="entry name" value="SAM_MT_TRMB"/>
    <property type="match status" value="1"/>
</dbReference>
<proteinExistence type="inferred from homology"/>
<reference key="1">
    <citation type="journal article" date="2010" name="PLoS ONE">
        <title>The complete multipartite genome sequence of Cupriavidus necator JMP134, a versatile pollutant degrader.</title>
        <authorList>
            <person name="Lykidis A."/>
            <person name="Perez-Pantoja D."/>
            <person name="Ledger T."/>
            <person name="Mavromatis K."/>
            <person name="Anderson I.J."/>
            <person name="Ivanova N.N."/>
            <person name="Hooper S.D."/>
            <person name="Lapidus A."/>
            <person name="Lucas S."/>
            <person name="Gonzalez B."/>
            <person name="Kyrpides N.C."/>
        </authorList>
    </citation>
    <scope>NUCLEOTIDE SEQUENCE [LARGE SCALE GENOMIC DNA]</scope>
    <source>
        <strain>JMP134 / LMG 1197</strain>
    </source>
</reference>